<evidence type="ECO:0000255" key="1">
    <source>
        <dbReference type="HAMAP-Rule" id="MF_00278"/>
    </source>
</evidence>
<protein>
    <recommendedName>
        <fullName evidence="1">Imidazole glycerol phosphate synthase subunit HisH</fullName>
        <ecNumber evidence="1">4.3.2.10</ecNumber>
    </recommendedName>
    <alternativeName>
        <fullName evidence="1">IGP synthase glutaminase subunit</fullName>
        <ecNumber evidence="1">3.5.1.2</ecNumber>
    </alternativeName>
    <alternativeName>
        <fullName evidence="1">IGP synthase subunit HisH</fullName>
    </alternativeName>
    <alternativeName>
        <fullName evidence="1">ImGP synthase subunit HisH</fullName>
        <shortName evidence="1">IGPS subunit HisH</shortName>
    </alternativeName>
</protein>
<keyword id="KW-0028">Amino-acid biosynthesis</keyword>
<keyword id="KW-0963">Cytoplasm</keyword>
<keyword id="KW-0315">Glutamine amidotransferase</keyword>
<keyword id="KW-0368">Histidine biosynthesis</keyword>
<keyword id="KW-0378">Hydrolase</keyword>
<keyword id="KW-0456">Lyase</keyword>
<keyword id="KW-1185">Reference proteome</keyword>
<feature type="chain" id="PRO_0000152350" description="Imidazole glycerol phosphate synthase subunit HisH">
    <location>
        <begin position="1"/>
        <end position="225"/>
    </location>
</feature>
<feature type="domain" description="Glutamine amidotransferase type-1" evidence="1">
    <location>
        <begin position="3"/>
        <end position="225"/>
    </location>
</feature>
<feature type="active site" description="Nucleophile" evidence="1">
    <location>
        <position position="82"/>
    </location>
</feature>
<feature type="active site" evidence="1">
    <location>
        <position position="205"/>
    </location>
</feature>
<feature type="active site" evidence="1">
    <location>
        <position position="207"/>
    </location>
</feature>
<dbReference type="EC" id="4.3.2.10" evidence="1"/>
<dbReference type="EC" id="3.5.1.2" evidence="1"/>
<dbReference type="EMBL" id="BX640422">
    <property type="protein sequence ID" value="CAE44027.1"/>
    <property type="molecule type" value="Genomic_DNA"/>
</dbReference>
<dbReference type="RefSeq" id="NP_882272.1">
    <property type="nucleotide sequence ID" value="NC_002929.2"/>
</dbReference>
<dbReference type="RefSeq" id="WP_010931644.1">
    <property type="nucleotide sequence ID" value="NZ_CP039022.1"/>
</dbReference>
<dbReference type="SMR" id="Q7VSY8"/>
<dbReference type="STRING" id="257313.BP3771"/>
<dbReference type="PaxDb" id="257313-BP3771"/>
<dbReference type="GeneID" id="69600002"/>
<dbReference type="KEGG" id="bpe:BP3771"/>
<dbReference type="PATRIC" id="fig|257313.5.peg.4075"/>
<dbReference type="eggNOG" id="COG0118">
    <property type="taxonomic scope" value="Bacteria"/>
</dbReference>
<dbReference type="HOGENOM" id="CLU_071837_2_0_4"/>
<dbReference type="UniPathway" id="UPA00031">
    <property type="reaction ID" value="UER00010"/>
</dbReference>
<dbReference type="Proteomes" id="UP000002676">
    <property type="component" value="Chromosome"/>
</dbReference>
<dbReference type="GO" id="GO:0005737">
    <property type="term" value="C:cytoplasm"/>
    <property type="evidence" value="ECO:0007669"/>
    <property type="project" value="UniProtKB-SubCell"/>
</dbReference>
<dbReference type="GO" id="GO:0004359">
    <property type="term" value="F:glutaminase activity"/>
    <property type="evidence" value="ECO:0007669"/>
    <property type="project" value="UniProtKB-EC"/>
</dbReference>
<dbReference type="GO" id="GO:0000107">
    <property type="term" value="F:imidazoleglycerol-phosphate synthase activity"/>
    <property type="evidence" value="ECO:0007669"/>
    <property type="project" value="UniProtKB-UniRule"/>
</dbReference>
<dbReference type="GO" id="GO:0016829">
    <property type="term" value="F:lyase activity"/>
    <property type="evidence" value="ECO:0007669"/>
    <property type="project" value="UniProtKB-KW"/>
</dbReference>
<dbReference type="GO" id="GO:0000105">
    <property type="term" value="P:L-histidine biosynthetic process"/>
    <property type="evidence" value="ECO:0007669"/>
    <property type="project" value="UniProtKB-UniRule"/>
</dbReference>
<dbReference type="CDD" id="cd01748">
    <property type="entry name" value="GATase1_IGP_Synthase"/>
    <property type="match status" value="1"/>
</dbReference>
<dbReference type="Gene3D" id="3.40.50.880">
    <property type="match status" value="1"/>
</dbReference>
<dbReference type="HAMAP" id="MF_00278">
    <property type="entry name" value="HisH"/>
    <property type="match status" value="1"/>
</dbReference>
<dbReference type="InterPro" id="IPR029062">
    <property type="entry name" value="Class_I_gatase-like"/>
</dbReference>
<dbReference type="InterPro" id="IPR017926">
    <property type="entry name" value="GATASE"/>
</dbReference>
<dbReference type="InterPro" id="IPR010139">
    <property type="entry name" value="Imidazole-glycPsynth_HisH"/>
</dbReference>
<dbReference type="NCBIfam" id="TIGR01855">
    <property type="entry name" value="IMP_synth_hisH"/>
    <property type="match status" value="1"/>
</dbReference>
<dbReference type="PANTHER" id="PTHR42701">
    <property type="entry name" value="IMIDAZOLE GLYCEROL PHOSPHATE SYNTHASE SUBUNIT HISH"/>
    <property type="match status" value="1"/>
</dbReference>
<dbReference type="PANTHER" id="PTHR42701:SF2">
    <property type="entry name" value="IMIDAZOLE GLYCEROL PHOSPHATE SYNTHASE SUBUNIT HISH 1"/>
    <property type="match status" value="1"/>
</dbReference>
<dbReference type="Pfam" id="PF00117">
    <property type="entry name" value="GATase"/>
    <property type="match status" value="1"/>
</dbReference>
<dbReference type="PIRSF" id="PIRSF000495">
    <property type="entry name" value="Amidotransf_hisH"/>
    <property type="match status" value="1"/>
</dbReference>
<dbReference type="SUPFAM" id="SSF52317">
    <property type="entry name" value="Class I glutamine amidotransferase-like"/>
    <property type="match status" value="1"/>
</dbReference>
<dbReference type="PROSITE" id="PS51273">
    <property type="entry name" value="GATASE_TYPE_1"/>
    <property type="match status" value="1"/>
</dbReference>
<proteinExistence type="inferred from homology"/>
<name>HIS5_BORPE</name>
<reference key="1">
    <citation type="journal article" date="2003" name="Nat. Genet.">
        <title>Comparative analysis of the genome sequences of Bordetella pertussis, Bordetella parapertussis and Bordetella bronchiseptica.</title>
        <authorList>
            <person name="Parkhill J."/>
            <person name="Sebaihia M."/>
            <person name="Preston A."/>
            <person name="Murphy L.D."/>
            <person name="Thomson N.R."/>
            <person name="Harris D.E."/>
            <person name="Holden M.T.G."/>
            <person name="Churcher C.M."/>
            <person name="Bentley S.D."/>
            <person name="Mungall K.L."/>
            <person name="Cerdeno-Tarraga A.-M."/>
            <person name="Temple L."/>
            <person name="James K.D."/>
            <person name="Harris B."/>
            <person name="Quail M.A."/>
            <person name="Achtman M."/>
            <person name="Atkin R."/>
            <person name="Baker S."/>
            <person name="Basham D."/>
            <person name="Bason N."/>
            <person name="Cherevach I."/>
            <person name="Chillingworth T."/>
            <person name="Collins M."/>
            <person name="Cronin A."/>
            <person name="Davis P."/>
            <person name="Doggett J."/>
            <person name="Feltwell T."/>
            <person name="Goble A."/>
            <person name="Hamlin N."/>
            <person name="Hauser H."/>
            <person name="Holroyd S."/>
            <person name="Jagels K."/>
            <person name="Leather S."/>
            <person name="Moule S."/>
            <person name="Norberczak H."/>
            <person name="O'Neil S."/>
            <person name="Ormond D."/>
            <person name="Price C."/>
            <person name="Rabbinowitsch E."/>
            <person name="Rutter S."/>
            <person name="Sanders M."/>
            <person name="Saunders D."/>
            <person name="Seeger K."/>
            <person name="Sharp S."/>
            <person name="Simmonds M."/>
            <person name="Skelton J."/>
            <person name="Squares R."/>
            <person name="Squares S."/>
            <person name="Stevens K."/>
            <person name="Unwin L."/>
            <person name="Whitehead S."/>
            <person name="Barrell B.G."/>
            <person name="Maskell D.J."/>
        </authorList>
    </citation>
    <scope>NUCLEOTIDE SEQUENCE [LARGE SCALE GENOMIC DNA]</scope>
    <source>
        <strain>Tohama I / ATCC BAA-589 / NCTC 13251</strain>
    </source>
</reference>
<accession>Q7VSY8</accession>
<comment type="function">
    <text evidence="1">IGPS catalyzes the conversion of PRFAR and glutamine to IGP, AICAR and glutamate. The HisH subunit catalyzes the hydrolysis of glutamine to glutamate and ammonia as part of the synthesis of IGP and AICAR. The resulting ammonia molecule is channeled to the active site of HisF.</text>
</comment>
<comment type="catalytic activity">
    <reaction evidence="1">
        <text>5-[(5-phospho-1-deoxy-D-ribulos-1-ylimino)methylamino]-1-(5-phospho-beta-D-ribosyl)imidazole-4-carboxamide + L-glutamine = D-erythro-1-(imidazol-4-yl)glycerol 3-phosphate + 5-amino-1-(5-phospho-beta-D-ribosyl)imidazole-4-carboxamide + L-glutamate + H(+)</text>
        <dbReference type="Rhea" id="RHEA:24793"/>
        <dbReference type="ChEBI" id="CHEBI:15378"/>
        <dbReference type="ChEBI" id="CHEBI:29985"/>
        <dbReference type="ChEBI" id="CHEBI:58278"/>
        <dbReference type="ChEBI" id="CHEBI:58359"/>
        <dbReference type="ChEBI" id="CHEBI:58475"/>
        <dbReference type="ChEBI" id="CHEBI:58525"/>
        <dbReference type="EC" id="4.3.2.10"/>
    </reaction>
</comment>
<comment type="catalytic activity">
    <reaction evidence="1">
        <text>L-glutamine + H2O = L-glutamate + NH4(+)</text>
        <dbReference type="Rhea" id="RHEA:15889"/>
        <dbReference type="ChEBI" id="CHEBI:15377"/>
        <dbReference type="ChEBI" id="CHEBI:28938"/>
        <dbReference type="ChEBI" id="CHEBI:29985"/>
        <dbReference type="ChEBI" id="CHEBI:58359"/>
        <dbReference type="EC" id="3.5.1.2"/>
    </reaction>
</comment>
<comment type="pathway">
    <text evidence="1">Amino-acid biosynthesis; L-histidine biosynthesis; L-histidine from 5-phospho-alpha-D-ribose 1-diphosphate: step 5/9.</text>
</comment>
<comment type="subunit">
    <text evidence="1">Heterodimer of HisH and HisF.</text>
</comment>
<comment type="subcellular location">
    <subcellularLocation>
        <location evidence="1">Cytoplasm</location>
    </subcellularLocation>
</comment>
<gene>
    <name evidence="1" type="primary">hisH</name>
    <name type="ordered locus">BP3771</name>
</gene>
<organism>
    <name type="scientific">Bordetella pertussis (strain Tohama I / ATCC BAA-589 / NCTC 13251)</name>
    <dbReference type="NCBI Taxonomy" id="257313"/>
    <lineage>
        <taxon>Bacteria</taxon>
        <taxon>Pseudomonadati</taxon>
        <taxon>Pseudomonadota</taxon>
        <taxon>Betaproteobacteria</taxon>
        <taxon>Burkholderiales</taxon>
        <taxon>Alcaligenaceae</taxon>
        <taxon>Bordetella</taxon>
    </lineage>
</organism>
<sequence length="225" mass="24399">MSTIAIVDYGMGNFHSVARALQHAAPDADIRICNRPEQIDAADRVVFPGQGAMPDCMRTLNESGLRAAVERAAASKPLMGVCVGEQMLFERSEEGGTPCLGIFPGEVRRFAGPQFADPVAADQAAAAPPAAARERLKVPHMGWNQVRQTRSHALWEGIPDGTHFYFVHSYYAAPSDPALTTGVTDYGVAFTCAVAAANIFAVQFHPEKSAEHGLRLYRNFVDWQP</sequence>